<comment type="function">
    <text evidence="1">Autophagy factor required for autophagosome formation. Stabilizes ATG13, protecting it from proteasomal degradation.</text>
</comment>
<comment type="subunit">
    <text evidence="1">Interacts with ATG13. Associates with a complex composed of ATG13, ULK1 and RB1CC1; the association with this complex requires the presence of ATG13.</text>
</comment>
<comment type="subcellular location">
    <subcellularLocation>
        <location evidence="1">Cytoplasm</location>
    </subcellularLocation>
    <subcellularLocation>
        <location evidence="1">Preautophagosomal structure</location>
    </subcellularLocation>
    <text evidence="1">Under starvation conditions, it is localized to puncate structures primarily representing the isolation membrane; the isolation membrane sequesters a portion of the cytoplasm resulting in autophagosome formation.</text>
</comment>
<comment type="similarity">
    <text evidence="2">Belongs to the ATG101 family.</text>
</comment>
<evidence type="ECO:0000250" key="1">
    <source>
        <dbReference type="UniProtKB" id="Q9BSB4"/>
    </source>
</evidence>
<evidence type="ECO:0000305" key="2"/>
<name>ATGA1_RAT</name>
<feature type="chain" id="PRO_0000294324" description="Autophagy-related protein 101">
    <location>
        <begin position="1"/>
        <end position="218"/>
    </location>
</feature>
<feature type="region of interest" description="Important for interaction with ATG13" evidence="1">
    <location>
        <begin position="152"/>
        <end position="156"/>
    </location>
</feature>
<sequence length="218" mass="25016">MNCRSEVLEVSVEGRQVEEAMLAVLHTVLLHRSTGKFHYKKEGTYSIGTVGIQDVDCDFIDFTYVRVSSEELDRALRKVVGEFKDALRNSGGDGLGQMSLEFYQKKKSRWPFSDECIPWEVWTVKVHVVALATEQERQICREKVGEKLCEKIINIVEVMSRHEYLPKMPTQSELDNVFDTGLRDVQPYLYKISFQITEALGTSVTTTMRRLIKDTLAL</sequence>
<organism>
    <name type="scientific">Rattus norvegicus</name>
    <name type="common">Rat</name>
    <dbReference type="NCBI Taxonomy" id="10116"/>
    <lineage>
        <taxon>Eukaryota</taxon>
        <taxon>Metazoa</taxon>
        <taxon>Chordata</taxon>
        <taxon>Craniata</taxon>
        <taxon>Vertebrata</taxon>
        <taxon>Euteleostomi</taxon>
        <taxon>Mammalia</taxon>
        <taxon>Eutheria</taxon>
        <taxon>Euarchontoglires</taxon>
        <taxon>Glires</taxon>
        <taxon>Rodentia</taxon>
        <taxon>Myomorpha</taxon>
        <taxon>Muroidea</taxon>
        <taxon>Muridae</taxon>
        <taxon>Murinae</taxon>
        <taxon>Rattus</taxon>
    </lineage>
</organism>
<protein>
    <recommendedName>
        <fullName>Autophagy-related protein 101</fullName>
    </recommendedName>
</protein>
<gene>
    <name type="primary">Atg101</name>
</gene>
<accession>Q6AY69</accession>
<keyword id="KW-0072">Autophagy</keyword>
<keyword id="KW-0963">Cytoplasm</keyword>
<keyword id="KW-1185">Reference proteome</keyword>
<proteinExistence type="evidence at transcript level"/>
<dbReference type="EMBL" id="BC079170">
    <property type="protein sequence ID" value="AAH79170.1"/>
    <property type="molecule type" value="mRNA"/>
</dbReference>
<dbReference type="RefSeq" id="NP_001007660.2">
    <property type="nucleotide sequence ID" value="NM_001007659.2"/>
</dbReference>
<dbReference type="RefSeq" id="NP_001258043.1">
    <property type="nucleotide sequence ID" value="NM_001271114.1"/>
</dbReference>
<dbReference type="RefSeq" id="XP_006242386.1">
    <property type="nucleotide sequence ID" value="XM_006242324.5"/>
</dbReference>
<dbReference type="SMR" id="Q6AY69"/>
<dbReference type="FunCoup" id="Q6AY69">
    <property type="interactions" value="849"/>
</dbReference>
<dbReference type="STRING" id="10116.ENSRNOP00000010195"/>
<dbReference type="PhosphoSitePlus" id="Q6AY69"/>
<dbReference type="jPOST" id="Q6AY69"/>
<dbReference type="PaxDb" id="10116-ENSRNOP00000010195"/>
<dbReference type="GeneID" id="300240"/>
<dbReference type="KEGG" id="rno:300240"/>
<dbReference type="UCSC" id="RGD:1359310">
    <property type="organism name" value="rat"/>
</dbReference>
<dbReference type="AGR" id="RGD:1359310"/>
<dbReference type="CTD" id="60673"/>
<dbReference type="RGD" id="1359310">
    <property type="gene designation" value="Atg101"/>
</dbReference>
<dbReference type="VEuPathDB" id="HostDB:ENSRNOG00000007756"/>
<dbReference type="eggNOG" id="KOG4493">
    <property type="taxonomic scope" value="Eukaryota"/>
</dbReference>
<dbReference type="InParanoid" id="Q6AY69"/>
<dbReference type="OrthoDB" id="10259639at2759"/>
<dbReference type="PhylomeDB" id="Q6AY69"/>
<dbReference type="TreeFam" id="TF320996"/>
<dbReference type="Reactome" id="R-RNO-1632852">
    <property type="pathway name" value="Macroautophagy"/>
</dbReference>
<dbReference type="PRO" id="PR:Q6AY69"/>
<dbReference type="Proteomes" id="UP000002494">
    <property type="component" value="Chromosome 7"/>
</dbReference>
<dbReference type="Bgee" id="ENSRNOG00000007756">
    <property type="expression patterns" value="Expressed in skeletal muscle tissue and 20 other cell types or tissues"/>
</dbReference>
<dbReference type="GO" id="GO:1990316">
    <property type="term" value="C:Atg1/ULK1 kinase complex"/>
    <property type="evidence" value="ECO:0000266"/>
    <property type="project" value="RGD"/>
</dbReference>
<dbReference type="GO" id="GO:0000407">
    <property type="term" value="C:phagophore assembly site"/>
    <property type="evidence" value="ECO:0000266"/>
    <property type="project" value="RGD"/>
</dbReference>
<dbReference type="GO" id="GO:0042802">
    <property type="term" value="F:identical protein binding"/>
    <property type="evidence" value="ECO:0000266"/>
    <property type="project" value="RGD"/>
</dbReference>
<dbReference type="GO" id="GO:0019901">
    <property type="term" value="F:protein kinase binding"/>
    <property type="evidence" value="ECO:0000318"/>
    <property type="project" value="GO_Central"/>
</dbReference>
<dbReference type="GO" id="GO:0044877">
    <property type="term" value="F:protein-containing complex binding"/>
    <property type="evidence" value="ECO:0000266"/>
    <property type="project" value="RGD"/>
</dbReference>
<dbReference type="GO" id="GO:0000045">
    <property type="term" value="P:autophagosome assembly"/>
    <property type="evidence" value="ECO:0000266"/>
    <property type="project" value="RGD"/>
</dbReference>
<dbReference type="GO" id="GO:0008285">
    <property type="term" value="P:negative regulation of cell population proliferation"/>
    <property type="evidence" value="ECO:0000266"/>
    <property type="project" value="RGD"/>
</dbReference>
<dbReference type="GO" id="GO:0010508">
    <property type="term" value="P:positive regulation of autophagy"/>
    <property type="evidence" value="ECO:0000266"/>
    <property type="project" value="RGD"/>
</dbReference>
<dbReference type="InterPro" id="IPR012445">
    <property type="entry name" value="ATG101"/>
</dbReference>
<dbReference type="PANTHER" id="PTHR13292">
    <property type="entry name" value="AUTOPHAGY-RELATED PROTEIN 101"/>
    <property type="match status" value="1"/>
</dbReference>
<dbReference type="PANTHER" id="PTHR13292:SF0">
    <property type="entry name" value="AUTOPHAGY-RELATED PROTEIN 101"/>
    <property type="match status" value="1"/>
</dbReference>
<dbReference type="Pfam" id="PF07855">
    <property type="entry name" value="ATG101"/>
    <property type="match status" value="1"/>
</dbReference>
<reference key="1">
    <citation type="journal article" date="2004" name="Genome Res.">
        <title>The status, quality, and expansion of the NIH full-length cDNA project: the Mammalian Gene Collection (MGC).</title>
        <authorList>
            <consortium name="The MGC Project Team"/>
        </authorList>
    </citation>
    <scope>NUCLEOTIDE SEQUENCE [LARGE SCALE MRNA]</scope>
    <source>
        <tissue>Kidney</tissue>
    </source>
</reference>